<comment type="function">
    <text evidence="1">ATP-dependent specificity component of the Clp protease. It directs the protease to specific substrates. Can perform chaperone functions in the absence of ClpP.</text>
</comment>
<comment type="subunit">
    <text evidence="1">Component of the ClpX-ClpP complex. Forms a hexameric ring that, in the presence of ATP, binds to fourteen ClpP subunits assembled into a disk-like structure with a central cavity, resembling the structure of eukaryotic proteasomes.</text>
</comment>
<comment type="similarity">
    <text evidence="1">Belongs to the ClpX chaperone family.</text>
</comment>
<name>CLPX_SHISS</name>
<feature type="chain" id="PRO_1000024663" description="ATP-dependent Clp protease ATP-binding subunit ClpX">
    <location>
        <begin position="1"/>
        <end position="424"/>
    </location>
</feature>
<feature type="domain" description="ClpX-type ZB" evidence="2">
    <location>
        <begin position="2"/>
        <end position="56"/>
    </location>
</feature>
<feature type="binding site" evidence="2">
    <location>
        <position position="15"/>
    </location>
    <ligand>
        <name>Zn(2+)</name>
        <dbReference type="ChEBI" id="CHEBI:29105"/>
    </ligand>
</feature>
<feature type="binding site" evidence="2">
    <location>
        <position position="18"/>
    </location>
    <ligand>
        <name>Zn(2+)</name>
        <dbReference type="ChEBI" id="CHEBI:29105"/>
    </ligand>
</feature>
<feature type="binding site" evidence="2">
    <location>
        <position position="37"/>
    </location>
    <ligand>
        <name>Zn(2+)</name>
        <dbReference type="ChEBI" id="CHEBI:29105"/>
    </ligand>
</feature>
<feature type="binding site" evidence="2">
    <location>
        <position position="40"/>
    </location>
    <ligand>
        <name>Zn(2+)</name>
        <dbReference type="ChEBI" id="CHEBI:29105"/>
    </ligand>
</feature>
<feature type="binding site" evidence="1">
    <location>
        <begin position="120"/>
        <end position="127"/>
    </location>
    <ligand>
        <name>ATP</name>
        <dbReference type="ChEBI" id="CHEBI:30616"/>
    </ligand>
</feature>
<gene>
    <name evidence="1" type="primary">clpX</name>
    <name type="ordered locus">SSON_0421</name>
</gene>
<proteinExistence type="inferred from homology"/>
<keyword id="KW-0067">ATP-binding</keyword>
<keyword id="KW-0143">Chaperone</keyword>
<keyword id="KW-0479">Metal-binding</keyword>
<keyword id="KW-0547">Nucleotide-binding</keyword>
<keyword id="KW-1185">Reference proteome</keyword>
<keyword id="KW-0862">Zinc</keyword>
<dbReference type="EMBL" id="CP000038">
    <property type="protein sequence ID" value="AAZ87197.1"/>
    <property type="molecule type" value="Genomic_DNA"/>
</dbReference>
<dbReference type="RefSeq" id="WP_000130305.1">
    <property type="nucleotide sequence ID" value="NC_007384.1"/>
</dbReference>
<dbReference type="SMR" id="Q3Z4W5"/>
<dbReference type="GeneID" id="93777016"/>
<dbReference type="KEGG" id="ssn:SSON_0421"/>
<dbReference type="HOGENOM" id="CLU_014218_8_2_6"/>
<dbReference type="Proteomes" id="UP000002529">
    <property type="component" value="Chromosome"/>
</dbReference>
<dbReference type="GO" id="GO:0009376">
    <property type="term" value="C:HslUV protease complex"/>
    <property type="evidence" value="ECO:0007669"/>
    <property type="project" value="TreeGrafter"/>
</dbReference>
<dbReference type="GO" id="GO:0005524">
    <property type="term" value="F:ATP binding"/>
    <property type="evidence" value="ECO:0007669"/>
    <property type="project" value="UniProtKB-UniRule"/>
</dbReference>
<dbReference type="GO" id="GO:0016887">
    <property type="term" value="F:ATP hydrolysis activity"/>
    <property type="evidence" value="ECO:0007669"/>
    <property type="project" value="InterPro"/>
</dbReference>
<dbReference type="GO" id="GO:0140662">
    <property type="term" value="F:ATP-dependent protein folding chaperone"/>
    <property type="evidence" value="ECO:0007669"/>
    <property type="project" value="InterPro"/>
</dbReference>
<dbReference type="GO" id="GO:0046983">
    <property type="term" value="F:protein dimerization activity"/>
    <property type="evidence" value="ECO:0007669"/>
    <property type="project" value="InterPro"/>
</dbReference>
<dbReference type="GO" id="GO:0051082">
    <property type="term" value="F:unfolded protein binding"/>
    <property type="evidence" value="ECO:0007669"/>
    <property type="project" value="UniProtKB-UniRule"/>
</dbReference>
<dbReference type="GO" id="GO:0008270">
    <property type="term" value="F:zinc ion binding"/>
    <property type="evidence" value="ECO:0007669"/>
    <property type="project" value="InterPro"/>
</dbReference>
<dbReference type="GO" id="GO:0051301">
    <property type="term" value="P:cell division"/>
    <property type="evidence" value="ECO:0007669"/>
    <property type="project" value="TreeGrafter"/>
</dbReference>
<dbReference type="GO" id="GO:0051603">
    <property type="term" value="P:proteolysis involved in protein catabolic process"/>
    <property type="evidence" value="ECO:0007669"/>
    <property type="project" value="TreeGrafter"/>
</dbReference>
<dbReference type="CDD" id="cd19497">
    <property type="entry name" value="RecA-like_ClpX"/>
    <property type="match status" value="1"/>
</dbReference>
<dbReference type="FunFam" id="1.10.8.60:FF:000002">
    <property type="entry name" value="ATP-dependent Clp protease ATP-binding subunit ClpX"/>
    <property type="match status" value="1"/>
</dbReference>
<dbReference type="FunFam" id="3.40.50.300:FF:000005">
    <property type="entry name" value="ATP-dependent Clp protease ATP-binding subunit ClpX"/>
    <property type="match status" value="1"/>
</dbReference>
<dbReference type="Gene3D" id="1.10.8.60">
    <property type="match status" value="1"/>
</dbReference>
<dbReference type="Gene3D" id="6.20.220.10">
    <property type="entry name" value="ClpX chaperone, C4-type zinc finger domain"/>
    <property type="match status" value="1"/>
</dbReference>
<dbReference type="Gene3D" id="3.40.50.300">
    <property type="entry name" value="P-loop containing nucleotide triphosphate hydrolases"/>
    <property type="match status" value="1"/>
</dbReference>
<dbReference type="HAMAP" id="MF_00175">
    <property type="entry name" value="ClpX"/>
    <property type="match status" value="1"/>
</dbReference>
<dbReference type="InterPro" id="IPR003593">
    <property type="entry name" value="AAA+_ATPase"/>
</dbReference>
<dbReference type="InterPro" id="IPR050052">
    <property type="entry name" value="ATP-dep_Clp_protease_ClpX"/>
</dbReference>
<dbReference type="InterPro" id="IPR003959">
    <property type="entry name" value="ATPase_AAA_core"/>
</dbReference>
<dbReference type="InterPro" id="IPR019489">
    <property type="entry name" value="Clp_ATPase_C"/>
</dbReference>
<dbReference type="InterPro" id="IPR004487">
    <property type="entry name" value="Clp_protease_ATP-bd_su_ClpX"/>
</dbReference>
<dbReference type="InterPro" id="IPR046425">
    <property type="entry name" value="ClpX_bact"/>
</dbReference>
<dbReference type="InterPro" id="IPR027417">
    <property type="entry name" value="P-loop_NTPase"/>
</dbReference>
<dbReference type="InterPro" id="IPR010603">
    <property type="entry name" value="Znf_CppX_C4"/>
</dbReference>
<dbReference type="InterPro" id="IPR038366">
    <property type="entry name" value="Znf_CppX_C4_sf"/>
</dbReference>
<dbReference type="NCBIfam" id="TIGR00382">
    <property type="entry name" value="clpX"/>
    <property type="match status" value="1"/>
</dbReference>
<dbReference type="NCBIfam" id="NF003745">
    <property type="entry name" value="PRK05342.1"/>
    <property type="match status" value="1"/>
</dbReference>
<dbReference type="PANTHER" id="PTHR48102:SF7">
    <property type="entry name" value="ATP-DEPENDENT CLP PROTEASE ATP-BINDING SUBUNIT CLPX-LIKE, MITOCHONDRIAL"/>
    <property type="match status" value="1"/>
</dbReference>
<dbReference type="PANTHER" id="PTHR48102">
    <property type="entry name" value="ATP-DEPENDENT CLP PROTEASE ATP-BINDING SUBUNIT CLPX-LIKE, MITOCHONDRIAL-RELATED"/>
    <property type="match status" value="1"/>
</dbReference>
<dbReference type="Pfam" id="PF07724">
    <property type="entry name" value="AAA_2"/>
    <property type="match status" value="1"/>
</dbReference>
<dbReference type="Pfam" id="PF10431">
    <property type="entry name" value="ClpB_D2-small"/>
    <property type="match status" value="1"/>
</dbReference>
<dbReference type="Pfam" id="PF06689">
    <property type="entry name" value="zf-C4_ClpX"/>
    <property type="match status" value="1"/>
</dbReference>
<dbReference type="SMART" id="SM00382">
    <property type="entry name" value="AAA"/>
    <property type="match status" value="1"/>
</dbReference>
<dbReference type="SMART" id="SM01086">
    <property type="entry name" value="ClpB_D2-small"/>
    <property type="match status" value="1"/>
</dbReference>
<dbReference type="SMART" id="SM00994">
    <property type="entry name" value="zf-C4_ClpX"/>
    <property type="match status" value="1"/>
</dbReference>
<dbReference type="SUPFAM" id="SSF57716">
    <property type="entry name" value="Glucocorticoid receptor-like (DNA-binding domain)"/>
    <property type="match status" value="1"/>
</dbReference>
<dbReference type="SUPFAM" id="SSF52540">
    <property type="entry name" value="P-loop containing nucleoside triphosphate hydrolases"/>
    <property type="match status" value="1"/>
</dbReference>
<dbReference type="PROSITE" id="PS51902">
    <property type="entry name" value="CLPX_ZB"/>
    <property type="match status" value="1"/>
</dbReference>
<organism>
    <name type="scientific">Shigella sonnei (strain Ss046)</name>
    <dbReference type="NCBI Taxonomy" id="300269"/>
    <lineage>
        <taxon>Bacteria</taxon>
        <taxon>Pseudomonadati</taxon>
        <taxon>Pseudomonadota</taxon>
        <taxon>Gammaproteobacteria</taxon>
        <taxon>Enterobacterales</taxon>
        <taxon>Enterobacteriaceae</taxon>
        <taxon>Shigella</taxon>
    </lineage>
</organism>
<evidence type="ECO:0000255" key="1">
    <source>
        <dbReference type="HAMAP-Rule" id="MF_00175"/>
    </source>
</evidence>
<evidence type="ECO:0000255" key="2">
    <source>
        <dbReference type="PROSITE-ProRule" id="PRU01250"/>
    </source>
</evidence>
<protein>
    <recommendedName>
        <fullName evidence="1">ATP-dependent Clp protease ATP-binding subunit ClpX</fullName>
    </recommendedName>
</protein>
<sequence length="424" mass="46356">MTDKRKDGSGKLLYCSFCGKSQHEVRKLIAGPSVYICDECVDLCNDIIREEIKEVAPHRERSALPTPHEIRNHLDDYVIGQEQAKKVLAVAVYNHYKRLRNGDTSNGVELGKSNILLIGPTGSGKTLLAETLARLLDVPFTMADATTLTEAGYVGEDVENIIQKLLQKCDYDVQKAQRGIVYIDEIDKISRKSDNPSITRDVSGEGVQQALLKLIEGTVAAVPPQGGRKHPQQEFLQVDTSKILFICGGAFAGLDKVISHRVETGSGIGFGATVKAKSDKASEGELLAQVEPEDLIKFGLIPEFIGRLPVVATLNELSEEALIQILKEPKNALTKQYQALFNLEGVDLEFRDEALDAIAKKAMARKTGARGLRSIVEAALLDTMYDLPSMEDVEKVVIDESVIDGQSKPLLIYGKPEAQQASGE</sequence>
<accession>Q3Z4W5</accession>
<reference key="1">
    <citation type="journal article" date="2005" name="Nucleic Acids Res.">
        <title>Genome dynamics and diversity of Shigella species, the etiologic agents of bacillary dysentery.</title>
        <authorList>
            <person name="Yang F."/>
            <person name="Yang J."/>
            <person name="Zhang X."/>
            <person name="Chen L."/>
            <person name="Jiang Y."/>
            <person name="Yan Y."/>
            <person name="Tang X."/>
            <person name="Wang J."/>
            <person name="Xiong Z."/>
            <person name="Dong J."/>
            <person name="Xue Y."/>
            <person name="Zhu Y."/>
            <person name="Xu X."/>
            <person name="Sun L."/>
            <person name="Chen S."/>
            <person name="Nie H."/>
            <person name="Peng J."/>
            <person name="Xu J."/>
            <person name="Wang Y."/>
            <person name="Yuan Z."/>
            <person name="Wen Y."/>
            <person name="Yao Z."/>
            <person name="Shen Y."/>
            <person name="Qiang B."/>
            <person name="Hou Y."/>
            <person name="Yu J."/>
            <person name="Jin Q."/>
        </authorList>
    </citation>
    <scope>NUCLEOTIDE SEQUENCE [LARGE SCALE GENOMIC DNA]</scope>
    <source>
        <strain>Ss046</strain>
    </source>
</reference>